<protein>
    <recommendedName>
        <fullName evidence="1">Phosphoribosylformylglycinamidine synthase subunit PurQ</fullName>
        <shortName evidence="1">FGAM synthase</shortName>
        <ecNumber evidence="1">6.3.5.3</ecNumber>
    </recommendedName>
    <alternativeName>
        <fullName evidence="1">Formylglycinamide ribonucleotide amidotransferase subunit I</fullName>
        <shortName evidence="1">FGAR amidotransferase I</shortName>
        <shortName evidence="1">FGAR-AT I</shortName>
    </alternativeName>
    <alternativeName>
        <fullName evidence="1">Glutaminase PurQ</fullName>
        <ecNumber evidence="1">3.5.1.2</ecNumber>
    </alternativeName>
    <alternativeName>
        <fullName evidence="1">Phosphoribosylformylglycinamidine synthase subunit I</fullName>
    </alternativeName>
</protein>
<organism>
    <name type="scientific">Streptomyces coelicolor (strain ATCC BAA-471 / A3(2) / M145)</name>
    <dbReference type="NCBI Taxonomy" id="100226"/>
    <lineage>
        <taxon>Bacteria</taxon>
        <taxon>Bacillati</taxon>
        <taxon>Actinomycetota</taxon>
        <taxon>Actinomycetes</taxon>
        <taxon>Kitasatosporales</taxon>
        <taxon>Streptomycetaceae</taxon>
        <taxon>Streptomyces</taxon>
        <taxon>Streptomyces albidoflavus group</taxon>
    </lineage>
</organism>
<feature type="chain" id="PRO_0000100592" description="Phosphoribosylformylglycinamidine synthase subunit PurQ">
    <location>
        <begin position="1"/>
        <end position="226"/>
    </location>
</feature>
<feature type="domain" description="Glutamine amidotransferase type-1" evidence="1">
    <location>
        <begin position="4"/>
        <end position="226"/>
    </location>
</feature>
<feature type="active site" description="Nucleophile" evidence="1">
    <location>
        <position position="87"/>
    </location>
</feature>
<feature type="active site" evidence="1">
    <location>
        <position position="196"/>
    </location>
</feature>
<feature type="active site" evidence="1">
    <location>
        <position position="198"/>
    </location>
</feature>
<name>PURQ_STRCO</name>
<keyword id="KW-0067">ATP-binding</keyword>
<keyword id="KW-0963">Cytoplasm</keyword>
<keyword id="KW-0315">Glutamine amidotransferase</keyword>
<keyword id="KW-0378">Hydrolase</keyword>
<keyword id="KW-0436">Ligase</keyword>
<keyword id="KW-0547">Nucleotide-binding</keyword>
<keyword id="KW-0658">Purine biosynthesis</keyword>
<keyword id="KW-1185">Reference proteome</keyword>
<sequence>MTARIGVVTFPGSLDDRDTQRAIRVAGAEPVALWHKDKDLKQVDAVVLCGGFSYGDYLRAGAIARFSPVMDTVIDQAKAGLPVLGICNGFQILTEAHLLPGGMLGNDHLHFICRDQKLRVENADTSWTSDYTAGQEIHIPLKNMDGRYVADRRTLDELEAEGRVAFRYLDMNPNGSLNDIAGITNAAGNVVGLMPHPEHAVESLIGTGRTDGLPFFTSILKKLVNA</sequence>
<gene>
    <name evidence="1" type="primary">purQ</name>
    <name type="ordered locus">SCO4078</name>
    <name type="ORF">SCD25.14</name>
</gene>
<comment type="function">
    <text evidence="1">Part of the phosphoribosylformylglycinamidine synthase complex involved in the purines biosynthetic pathway. Catalyzes the ATP-dependent conversion of formylglycinamide ribonucleotide (FGAR) and glutamine to yield formylglycinamidine ribonucleotide (FGAM) and glutamate. The FGAM synthase complex is composed of three subunits. PurQ produces an ammonia molecule by converting glutamine to glutamate. PurL transfers the ammonia molecule to FGAR to form FGAM in an ATP-dependent manner. PurS interacts with PurQ and PurL and is thought to assist in the transfer of the ammonia molecule from PurQ to PurL.</text>
</comment>
<comment type="catalytic activity">
    <reaction evidence="1">
        <text>N(2)-formyl-N(1)-(5-phospho-beta-D-ribosyl)glycinamide + L-glutamine + ATP + H2O = 2-formamido-N(1)-(5-O-phospho-beta-D-ribosyl)acetamidine + L-glutamate + ADP + phosphate + H(+)</text>
        <dbReference type="Rhea" id="RHEA:17129"/>
        <dbReference type="ChEBI" id="CHEBI:15377"/>
        <dbReference type="ChEBI" id="CHEBI:15378"/>
        <dbReference type="ChEBI" id="CHEBI:29985"/>
        <dbReference type="ChEBI" id="CHEBI:30616"/>
        <dbReference type="ChEBI" id="CHEBI:43474"/>
        <dbReference type="ChEBI" id="CHEBI:58359"/>
        <dbReference type="ChEBI" id="CHEBI:147286"/>
        <dbReference type="ChEBI" id="CHEBI:147287"/>
        <dbReference type="ChEBI" id="CHEBI:456216"/>
        <dbReference type="EC" id="6.3.5.3"/>
    </reaction>
</comment>
<comment type="catalytic activity">
    <reaction evidence="1">
        <text>L-glutamine + H2O = L-glutamate + NH4(+)</text>
        <dbReference type="Rhea" id="RHEA:15889"/>
        <dbReference type="ChEBI" id="CHEBI:15377"/>
        <dbReference type="ChEBI" id="CHEBI:28938"/>
        <dbReference type="ChEBI" id="CHEBI:29985"/>
        <dbReference type="ChEBI" id="CHEBI:58359"/>
        <dbReference type="EC" id="3.5.1.2"/>
    </reaction>
</comment>
<comment type="pathway">
    <text evidence="1">Purine metabolism; IMP biosynthesis via de novo pathway; 5-amino-1-(5-phospho-D-ribosyl)imidazole from N(2)-formyl-N(1)-(5-phospho-D-ribosyl)glycinamide: step 1/2.</text>
</comment>
<comment type="subunit">
    <text evidence="1">Part of the FGAM synthase complex composed of 1 PurL, 1 PurQ and 2 PurS subunits.</text>
</comment>
<comment type="subcellular location">
    <subcellularLocation>
        <location evidence="1">Cytoplasm</location>
    </subcellularLocation>
</comment>
<dbReference type="EC" id="6.3.5.3" evidence="1"/>
<dbReference type="EC" id="3.5.1.2" evidence="1"/>
<dbReference type="EMBL" id="AL939118">
    <property type="protein sequence ID" value="CAB56358.1"/>
    <property type="molecule type" value="Genomic_DNA"/>
</dbReference>
<dbReference type="RefSeq" id="NP_628259.1">
    <property type="nucleotide sequence ID" value="NC_003888.3"/>
</dbReference>
<dbReference type="RefSeq" id="WP_003974894.1">
    <property type="nucleotide sequence ID" value="NZ_VNID01000030.1"/>
</dbReference>
<dbReference type="SMR" id="Q9RKK6"/>
<dbReference type="FunCoup" id="Q9RKK6">
    <property type="interactions" value="42"/>
</dbReference>
<dbReference type="STRING" id="100226.gene:17761713"/>
<dbReference type="PaxDb" id="100226-SCO4078"/>
<dbReference type="GeneID" id="91384965"/>
<dbReference type="KEGG" id="sco:SCO4078"/>
<dbReference type="PATRIC" id="fig|100226.15.peg.4137"/>
<dbReference type="eggNOG" id="COG0047">
    <property type="taxonomic scope" value="Bacteria"/>
</dbReference>
<dbReference type="HOGENOM" id="CLU_001031_3_1_11"/>
<dbReference type="InParanoid" id="Q9RKK6"/>
<dbReference type="OrthoDB" id="9804441at2"/>
<dbReference type="PhylomeDB" id="Q9RKK6"/>
<dbReference type="UniPathway" id="UPA00074">
    <property type="reaction ID" value="UER00128"/>
</dbReference>
<dbReference type="Proteomes" id="UP000001973">
    <property type="component" value="Chromosome"/>
</dbReference>
<dbReference type="GO" id="GO:0005737">
    <property type="term" value="C:cytoplasm"/>
    <property type="evidence" value="ECO:0007669"/>
    <property type="project" value="UniProtKB-SubCell"/>
</dbReference>
<dbReference type="GO" id="GO:0005524">
    <property type="term" value="F:ATP binding"/>
    <property type="evidence" value="ECO:0007669"/>
    <property type="project" value="UniProtKB-KW"/>
</dbReference>
<dbReference type="GO" id="GO:0004359">
    <property type="term" value="F:glutaminase activity"/>
    <property type="evidence" value="ECO:0007669"/>
    <property type="project" value="UniProtKB-EC"/>
</dbReference>
<dbReference type="GO" id="GO:0004642">
    <property type="term" value="F:phosphoribosylformylglycinamidine synthase activity"/>
    <property type="evidence" value="ECO:0007669"/>
    <property type="project" value="UniProtKB-UniRule"/>
</dbReference>
<dbReference type="GO" id="GO:0006189">
    <property type="term" value="P:'de novo' IMP biosynthetic process"/>
    <property type="evidence" value="ECO:0007669"/>
    <property type="project" value="UniProtKB-UniRule"/>
</dbReference>
<dbReference type="CDD" id="cd01740">
    <property type="entry name" value="GATase1_FGAR_AT"/>
    <property type="match status" value="1"/>
</dbReference>
<dbReference type="FunFam" id="3.40.50.880:FF:000019">
    <property type="entry name" value="Phosphoribosylformylglycinamidine synthase subunit PurQ"/>
    <property type="match status" value="1"/>
</dbReference>
<dbReference type="Gene3D" id="3.40.50.880">
    <property type="match status" value="1"/>
</dbReference>
<dbReference type="HAMAP" id="MF_00421">
    <property type="entry name" value="PurQ"/>
    <property type="match status" value="1"/>
</dbReference>
<dbReference type="InterPro" id="IPR029062">
    <property type="entry name" value="Class_I_gatase-like"/>
</dbReference>
<dbReference type="InterPro" id="IPR010075">
    <property type="entry name" value="PRibForGlyAmidine_synth_PurQ"/>
</dbReference>
<dbReference type="NCBIfam" id="TIGR01737">
    <property type="entry name" value="FGAM_synth_I"/>
    <property type="match status" value="1"/>
</dbReference>
<dbReference type="NCBIfam" id="NF002957">
    <property type="entry name" value="PRK03619.1"/>
    <property type="match status" value="1"/>
</dbReference>
<dbReference type="PANTHER" id="PTHR47552">
    <property type="entry name" value="PHOSPHORIBOSYLFORMYLGLYCINAMIDINE SYNTHASE SUBUNIT PURQ"/>
    <property type="match status" value="1"/>
</dbReference>
<dbReference type="PANTHER" id="PTHR47552:SF1">
    <property type="entry name" value="PHOSPHORIBOSYLFORMYLGLYCINAMIDINE SYNTHASE SUBUNIT PURQ"/>
    <property type="match status" value="1"/>
</dbReference>
<dbReference type="Pfam" id="PF13507">
    <property type="entry name" value="GATase_5"/>
    <property type="match status" value="1"/>
</dbReference>
<dbReference type="PIRSF" id="PIRSF001586">
    <property type="entry name" value="FGAM_synth_I"/>
    <property type="match status" value="1"/>
</dbReference>
<dbReference type="SMART" id="SM01211">
    <property type="entry name" value="GATase_5"/>
    <property type="match status" value="1"/>
</dbReference>
<dbReference type="SUPFAM" id="SSF52317">
    <property type="entry name" value="Class I glutamine amidotransferase-like"/>
    <property type="match status" value="1"/>
</dbReference>
<dbReference type="PROSITE" id="PS51273">
    <property type="entry name" value="GATASE_TYPE_1"/>
    <property type="match status" value="1"/>
</dbReference>
<reference key="1">
    <citation type="journal article" date="2002" name="Nature">
        <title>Complete genome sequence of the model actinomycete Streptomyces coelicolor A3(2).</title>
        <authorList>
            <person name="Bentley S.D."/>
            <person name="Chater K.F."/>
            <person name="Cerdeno-Tarraga A.-M."/>
            <person name="Challis G.L."/>
            <person name="Thomson N.R."/>
            <person name="James K.D."/>
            <person name="Harris D.E."/>
            <person name="Quail M.A."/>
            <person name="Kieser H."/>
            <person name="Harper D."/>
            <person name="Bateman A."/>
            <person name="Brown S."/>
            <person name="Chandra G."/>
            <person name="Chen C.W."/>
            <person name="Collins M."/>
            <person name="Cronin A."/>
            <person name="Fraser A."/>
            <person name="Goble A."/>
            <person name="Hidalgo J."/>
            <person name="Hornsby T."/>
            <person name="Howarth S."/>
            <person name="Huang C.-H."/>
            <person name="Kieser T."/>
            <person name="Larke L."/>
            <person name="Murphy L.D."/>
            <person name="Oliver K."/>
            <person name="O'Neil S."/>
            <person name="Rabbinowitsch E."/>
            <person name="Rajandream M.A."/>
            <person name="Rutherford K.M."/>
            <person name="Rutter S."/>
            <person name="Seeger K."/>
            <person name="Saunders D."/>
            <person name="Sharp S."/>
            <person name="Squares R."/>
            <person name="Squares S."/>
            <person name="Taylor K."/>
            <person name="Warren T."/>
            <person name="Wietzorrek A."/>
            <person name="Woodward J.R."/>
            <person name="Barrell B.G."/>
            <person name="Parkhill J."/>
            <person name="Hopwood D.A."/>
        </authorList>
    </citation>
    <scope>NUCLEOTIDE SEQUENCE [LARGE SCALE GENOMIC DNA]</scope>
    <source>
        <strain>ATCC BAA-471 / A3(2) / M145</strain>
    </source>
</reference>
<evidence type="ECO:0000255" key="1">
    <source>
        <dbReference type="HAMAP-Rule" id="MF_00421"/>
    </source>
</evidence>
<proteinExistence type="inferred from homology"/>
<accession>Q9RKK6</accession>